<evidence type="ECO:0000255" key="1">
    <source>
        <dbReference type="HAMAP-Rule" id="MF_01383"/>
    </source>
</evidence>
<dbReference type="EC" id="1.10.3.9" evidence="1"/>
<dbReference type="EMBL" id="CP000828">
    <property type="protein sequence ID" value="ABW30977.1"/>
    <property type="molecule type" value="Genomic_DNA"/>
</dbReference>
<dbReference type="RefSeq" id="WP_012166176.1">
    <property type="nucleotide sequence ID" value="NC_009925.1"/>
</dbReference>
<dbReference type="SMR" id="B0C3P0"/>
<dbReference type="STRING" id="329726.AM1_6045"/>
<dbReference type="KEGG" id="amr:AM1_6045"/>
<dbReference type="eggNOG" id="ENOG502Z8JK">
    <property type="taxonomic scope" value="Bacteria"/>
</dbReference>
<dbReference type="HOGENOM" id="CLU_077965_0_0_3"/>
<dbReference type="OrthoDB" id="505356at2"/>
<dbReference type="Proteomes" id="UP000000268">
    <property type="component" value="Chromosome"/>
</dbReference>
<dbReference type="GO" id="GO:0009523">
    <property type="term" value="C:photosystem II"/>
    <property type="evidence" value="ECO:0007669"/>
    <property type="project" value="UniProtKB-KW"/>
</dbReference>
<dbReference type="GO" id="GO:0031676">
    <property type="term" value="C:plasma membrane-derived thylakoid membrane"/>
    <property type="evidence" value="ECO:0007669"/>
    <property type="project" value="UniProtKB-SubCell"/>
</dbReference>
<dbReference type="GO" id="GO:0016168">
    <property type="term" value="F:chlorophyll binding"/>
    <property type="evidence" value="ECO:0007669"/>
    <property type="project" value="UniProtKB-UniRule"/>
</dbReference>
<dbReference type="GO" id="GO:0045156">
    <property type="term" value="F:electron transporter, transferring electrons within the cyclic electron transport pathway of photosynthesis activity"/>
    <property type="evidence" value="ECO:0007669"/>
    <property type="project" value="InterPro"/>
</dbReference>
<dbReference type="GO" id="GO:0005506">
    <property type="term" value="F:iron ion binding"/>
    <property type="evidence" value="ECO:0007669"/>
    <property type="project" value="UniProtKB-UniRule"/>
</dbReference>
<dbReference type="GO" id="GO:0010242">
    <property type="term" value="F:oxygen evolving activity"/>
    <property type="evidence" value="ECO:0007669"/>
    <property type="project" value="UniProtKB-EC"/>
</dbReference>
<dbReference type="GO" id="GO:0009772">
    <property type="term" value="P:photosynthetic electron transport in photosystem II"/>
    <property type="evidence" value="ECO:0007669"/>
    <property type="project" value="InterPro"/>
</dbReference>
<dbReference type="Gene3D" id="1.20.85.10">
    <property type="entry name" value="Photosystem II protein D1-like"/>
    <property type="match status" value="1"/>
</dbReference>
<dbReference type="HAMAP" id="MF_01383">
    <property type="entry name" value="PSII_PsbD_D2"/>
    <property type="match status" value="1"/>
</dbReference>
<dbReference type="InterPro" id="IPR055266">
    <property type="entry name" value="D1/D2"/>
</dbReference>
<dbReference type="InterPro" id="IPR036854">
    <property type="entry name" value="Photo_II_D1/D2_sf"/>
</dbReference>
<dbReference type="InterPro" id="IPR000484">
    <property type="entry name" value="Photo_RC_L/M"/>
</dbReference>
<dbReference type="InterPro" id="IPR055265">
    <property type="entry name" value="Photo_RC_L/M_CS"/>
</dbReference>
<dbReference type="InterPro" id="IPR005868">
    <property type="entry name" value="PSII_PsbD/D2"/>
</dbReference>
<dbReference type="NCBIfam" id="TIGR01152">
    <property type="entry name" value="psbD"/>
    <property type="match status" value="1"/>
</dbReference>
<dbReference type="PANTHER" id="PTHR33149:SF12">
    <property type="entry name" value="PHOTOSYSTEM II D2 PROTEIN"/>
    <property type="match status" value="1"/>
</dbReference>
<dbReference type="PANTHER" id="PTHR33149">
    <property type="entry name" value="PHOTOSYSTEM II PROTEIN D1"/>
    <property type="match status" value="1"/>
</dbReference>
<dbReference type="Pfam" id="PF00124">
    <property type="entry name" value="Photo_RC"/>
    <property type="match status" value="1"/>
</dbReference>
<dbReference type="PRINTS" id="PR00256">
    <property type="entry name" value="REACTNCENTRE"/>
</dbReference>
<dbReference type="SUPFAM" id="SSF81483">
    <property type="entry name" value="Bacterial photosystem II reaction centre, L and M subunits"/>
    <property type="match status" value="1"/>
</dbReference>
<dbReference type="PROSITE" id="PS00244">
    <property type="entry name" value="REACTION_CENTER"/>
    <property type="match status" value="1"/>
</dbReference>
<sequence length="351" mass="39405">MTVALGRVQERGWFDVLDDWLKRDRFVFIGWSGLLLFPCAFLSIGGWFTGTTFVTSWYTHGLASSYLEGCNFLTAAVSTPADSMGHSLLLLWGPEARGDFTRWCQLGGMWNFVTLHGAFGLIGFMLRQFEIARLVNVRPYNAVAFSGPIAVFVSVFLMYPLGQSSWFFAPSWGVASIFRFLLFVQGFHNLTLNPFHMMGVAGILGGALLCAIHGATVENTLFEDTKDANTFSGFSPTQSEETYSMVTANRFWSQIFGIAFSNKRWLHFFMLFVPVTGLWASAIGLVGIALNMRAYDFVSQEIRAAEDPEFETFYTKNILLNEGLRAWMAPQDQIHENFVFPEEVLPRGNAL</sequence>
<gene>
    <name evidence="1" type="primary">psbD2</name>
    <name type="ordered locus">AM1_6045</name>
</gene>
<accession>B0C3P0</accession>
<organism>
    <name type="scientific">Acaryochloris marina (strain MBIC 11017)</name>
    <dbReference type="NCBI Taxonomy" id="329726"/>
    <lineage>
        <taxon>Bacteria</taxon>
        <taxon>Bacillati</taxon>
        <taxon>Cyanobacteriota</taxon>
        <taxon>Cyanophyceae</taxon>
        <taxon>Acaryochloridales</taxon>
        <taxon>Acaryochloridaceae</taxon>
        <taxon>Acaryochloris</taxon>
    </lineage>
</organism>
<name>PSBD2_ACAM1</name>
<protein>
    <recommendedName>
        <fullName evidence="1">Photosystem II D2 protein 2</fullName>
        <shortName evidence="1">PSII D2 protein 2</shortName>
        <ecNumber evidence="1">1.10.3.9</ecNumber>
    </recommendedName>
    <alternativeName>
        <fullName evidence="1">Photosystem Q(A) protein 2</fullName>
    </alternativeName>
</protein>
<feature type="chain" id="PRO_0000359598" description="Photosystem II D2 protein 2">
    <location>
        <begin position="1"/>
        <end position="351"/>
    </location>
</feature>
<feature type="transmembrane region" description="Helical" evidence="1">
    <location>
        <begin position="39"/>
        <end position="59"/>
    </location>
</feature>
<feature type="transmembrane region" description="Helical" evidence="1">
    <location>
        <begin position="123"/>
        <end position="139"/>
    </location>
</feature>
<feature type="transmembrane region" description="Helical" evidence="1">
    <location>
        <begin position="151"/>
        <end position="164"/>
    </location>
</feature>
<feature type="transmembrane region" description="Helical" evidence="1">
    <location>
        <begin position="206"/>
        <end position="226"/>
    </location>
</feature>
<feature type="transmembrane region" description="Helical" evidence="1">
    <location>
        <begin position="277"/>
        <end position="293"/>
    </location>
</feature>
<feature type="binding site" description="axial binding residue" evidence="1">
    <location>
        <position position="116"/>
    </location>
    <ligand>
        <name>chlorophyll a</name>
        <dbReference type="ChEBI" id="CHEBI:58416"/>
        <label>ChlzD2</label>
    </ligand>
    <ligandPart>
        <name>Mg</name>
        <dbReference type="ChEBI" id="CHEBI:25107"/>
    </ligandPart>
</feature>
<feature type="binding site" evidence="1">
    <location>
        <position position="128"/>
    </location>
    <ligand>
        <name>pheophytin a</name>
        <dbReference type="ChEBI" id="CHEBI:136840"/>
        <label>D2</label>
    </ligand>
</feature>
<feature type="binding site" evidence="1">
    <location>
        <position position="141"/>
    </location>
    <ligand>
        <name>pheophytin a</name>
        <dbReference type="ChEBI" id="CHEBI:136840"/>
        <label>D2</label>
    </ligand>
</feature>
<feature type="binding site" description="axial binding residue" evidence="1">
    <location>
        <position position="196"/>
    </location>
    <ligand>
        <name>chlorophyll a</name>
        <dbReference type="ChEBI" id="CHEBI:58416"/>
        <label>PD2</label>
    </ligand>
    <ligandPart>
        <name>Mg</name>
        <dbReference type="ChEBI" id="CHEBI:25107"/>
    </ligandPart>
</feature>
<feature type="binding site" evidence="1">
    <location>
        <position position="213"/>
    </location>
    <ligand>
        <name>a plastoquinone</name>
        <dbReference type="ChEBI" id="CHEBI:17757"/>
        <label>Q(A)</label>
    </ligand>
</feature>
<feature type="binding site" evidence="1">
    <location>
        <position position="213"/>
    </location>
    <ligand>
        <name>Fe cation</name>
        <dbReference type="ChEBI" id="CHEBI:24875"/>
        <note>ligand shared with heterodimeric partner</note>
    </ligand>
</feature>
<feature type="binding site" evidence="1">
    <location>
        <position position="260"/>
    </location>
    <ligand>
        <name>a plastoquinone</name>
        <dbReference type="ChEBI" id="CHEBI:17757"/>
        <label>Q(A)</label>
    </ligand>
</feature>
<feature type="binding site" evidence="1">
    <location>
        <position position="267"/>
    </location>
    <ligand>
        <name>Fe cation</name>
        <dbReference type="ChEBI" id="CHEBI:24875"/>
        <note>ligand shared with heterodimeric partner</note>
    </ligand>
</feature>
<keyword id="KW-0148">Chlorophyll</keyword>
<keyword id="KW-0157">Chromophore</keyword>
<keyword id="KW-0249">Electron transport</keyword>
<keyword id="KW-0408">Iron</keyword>
<keyword id="KW-0460">Magnesium</keyword>
<keyword id="KW-0472">Membrane</keyword>
<keyword id="KW-0479">Metal-binding</keyword>
<keyword id="KW-0560">Oxidoreductase</keyword>
<keyword id="KW-0602">Photosynthesis</keyword>
<keyword id="KW-0604">Photosystem II</keyword>
<keyword id="KW-1185">Reference proteome</keyword>
<keyword id="KW-0793">Thylakoid</keyword>
<keyword id="KW-0812">Transmembrane</keyword>
<keyword id="KW-1133">Transmembrane helix</keyword>
<keyword id="KW-0813">Transport</keyword>
<proteinExistence type="inferred from homology"/>
<comment type="function">
    <text evidence="1">Photosystem II (PSII) is a light-driven water:plastoquinone oxidoreductase that uses light energy to abstract electrons from H(2)O, generating O(2) and a proton gradient subsequently used for ATP formation. It consists of a core antenna complex that captures photons, and an electron transfer chain that converts photonic excitation into a charge separation. The D1/D2 (PsbA/PsbD) reaction center heterodimer binds P680, the primary electron donor of PSII as well as several subsequent electron acceptors. D2 is needed for assembly of a stable PSII complex.</text>
</comment>
<comment type="catalytic activity">
    <reaction evidence="1">
        <text>2 a plastoquinone + 4 hnu + 2 H2O = 2 a plastoquinol + O2</text>
        <dbReference type="Rhea" id="RHEA:36359"/>
        <dbReference type="Rhea" id="RHEA-COMP:9561"/>
        <dbReference type="Rhea" id="RHEA-COMP:9562"/>
        <dbReference type="ChEBI" id="CHEBI:15377"/>
        <dbReference type="ChEBI" id="CHEBI:15379"/>
        <dbReference type="ChEBI" id="CHEBI:17757"/>
        <dbReference type="ChEBI" id="CHEBI:30212"/>
        <dbReference type="ChEBI" id="CHEBI:62192"/>
        <dbReference type="EC" id="1.10.3.9"/>
    </reaction>
</comment>
<comment type="cofactor">
    <text evidence="1">The D1/D2 heterodimer binds P680, chlorophylls that are the primary electron donor of PSII, and subsequent electron acceptors. It shares a non-heme iron and each subunit binds pheophytin, quinone, additional chlorophylls, carotenoids and lipids. There is also a Cl(-1) ion associated with D1 and D2, which is required for oxygen evolution. The PSII complex binds additional chlorophylls, carotenoids and specific lipids.</text>
</comment>
<comment type="subunit">
    <text evidence="1">PSII is composed of 1 copy each of membrane proteins PsbA, PsbB, PsbC, PsbD, PsbE, PsbF, PsbH, PsbI, PsbJ, PsbK, PsbL, PsbM, PsbT, PsbX, PsbY, PsbZ, Psb30/Ycf12, peripheral proteins PsbO, CyanoQ (PsbQ), PsbU, PsbV and a large number of cofactors. It forms dimeric complexes.</text>
</comment>
<comment type="subcellular location">
    <subcellularLocation>
        <location evidence="1">Cellular thylakoid membrane</location>
        <topology evidence="1">Multi-pass membrane protein</topology>
    </subcellularLocation>
</comment>
<comment type="miscellaneous">
    <text evidence="1">2 of the reaction center chlorophylls (ChlD1 and ChlD2) are entirely coordinated by water.</text>
</comment>
<comment type="similarity">
    <text evidence="1">Belongs to the reaction center PufL/M/PsbA/D family.</text>
</comment>
<reference key="1">
    <citation type="journal article" date="2008" name="Proc. Natl. Acad. Sci. U.S.A.">
        <title>Niche adaptation and genome expansion in the chlorophyll d-producing cyanobacterium Acaryochloris marina.</title>
        <authorList>
            <person name="Swingley W.D."/>
            <person name="Chen M."/>
            <person name="Cheung P.C."/>
            <person name="Conrad A.L."/>
            <person name="Dejesa L.C."/>
            <person name="Hao J."/>
            <person name="Honchak B.M."/>
            <person name="Karbach L.E."/>
            <person name="Kurdoglu A."/>
            <person name="Lahiri S."/>
            <person name="Mastrian S.D."/>
            <person name="Miyashita H."/>
            <person name="Page L."/>
            <person name="Ramakrishna P."/>
            <person name="Satoh S."/>
            <person name="Sattley W.M."/>
            <person name="Shimada Y."/>
            <person name="Taylor H.L."/>
            <person name="Tomo T."/>
            <person name="Tsuchiya T."/>
            <person name="Wang Z.T."/>
            <person name="Raymond J."/>
            <person name="Mimuro M."/>
            <person name="Blankenship R.E."/>
            <person name="Touchman J.W."/>
        </authorList>
    </citation>
    <scope>NUCLEOTIDE SEQUENCE [LARGE SCALE GENOMIC DNA]</scope>
    <source>
        <strain>MBIC 11017</strain>
    </source>
</reference>